<accession>Q7P0G0</accession>
<dbReference type="EC" id="2.5.1.141" evidence="1"/>
<dbReference type="EMBL" id="AE016825">
    <property type="protein sequence ID" value="AAQ58283.1"/>
    <property type="molecule type" value="Genomic_DNA"/>
</dbReference>
<dbReference type="RefSeq" id="WP_011134162.1">
    <property type="nucleotide sequence ID" value="NC_005085.1"/>
</dbReference>
<dbReference type="SMR" id="Q7P0G0"/>
<dbReference type="STRING" id="243365.CV_0607"/>
<dbReference type="GeneID" id="66365487"/>
<dbReference type="KEGG" id="cvi:CV_0607"/>
<dbReference type="eggNOG" id="COG0109">
    <property type="taxonomic scope" value="Bacteria"/>
</dbReference>
<dbReference type="HOGENOM" id="CLU_029631_0_2_4"/>
<dbReference type="OrthoDB" id="9814417at2"/>
<dbReference type="UniPathway" id="UPA00834">
    <property type="reaction ID" value="UER00712"/>
</dbReference>
<dbReference type="Proteomes" id="UP000001424">
    <property type="component" value="Chromosome"/>
</dbReference>
<dbReference type="GO" id="GO:0005886">
    <property type="term" value="C:plasma membrane"/>
    <property type="evidence" value="ECO:0007669"/>
    <property type="project" value="UniProtKB-SubCell"/>
</dbReference>
<dbReference type="GO" id="GO:0008495">
    <property type="term" value="F:protoheme IX farnesyltransferase activity"/>
    <property type="evidence" value="ECO:0007669"/>
    <property type="project" value="UniProtKB-UniRule"/>
</dbReference>
<dbReference type="GO" id="GO:0048034">
    <property type="term" value="P:heme O biosynthetic process"/>
    <property type="evidence" value="ECO:0007669"/>
    <property type="project" value="UniProtKB-UniRule"/>
</dbReference>
<dbReference type="CDD" id="cd13957">
    <property type="entry name" value="PT_UbiA_Cox10"/>
    <property type="match status" value="1"/>
</dbReference>
<dbReference type="Gene3D" id="1.10.357.140">
    <property type="entry name" value="UbiA prenyltransferase"/>
    <property type="match status" value="1"/>
</dbReference>
<dbReference type="HAMAP" id="MF_00154">
    <property type="entry name" value="CyoE_CtaB"/>
    <property type="match status" value="1"/>
</dbReference>
<dbReference type="InterPro" id="IPR006369">
    <property type="entry name" value="Protohaem_IX_farnesylTrfase"/>
</dbReference>
<dbReference type="InterPro" id="IPR000537">
    <property type="entry name" value="UbiA_prenyltransferase"/>
</dbReference>
<dbReference type="InterPro" id="IPR044878">
    <property type="entry name" value="UbiA_sf"/>
</dbReference>
<dbReference type="NCBIfam" id="TIGR01473">
    <property type="entry name" value="cyoE_ctaB"/>
    <property type="match status" value="1"/>
</dbReference>
<dbReference type="NCBIfam" id="NF003349">
    <property type="entry name" value="PRK04375.1-2"/>
    <property type="match status" value="1"/>
</dbReference>
<dbReference type="PANTHER" id="PTHR43448:SF7">
    <property type="entry name" value="4-HYDROXYBENZOATE SOLANESYLTRANSFERASE"/>
    <property type="match status" value="1"/>
</dbReference>
<dbReference type="PANTHER" id="PTHR43448">
    <property type="entry name" value="PROTOHEME IX FARNESYLTRANSFERASE, MITOCHONDRIAL"/>
    <property type="match status" value="1"/>
</dbReference>
<dbReference type="Pfam" id="PF01040">
    <property type="entry name" value="UbiA"/>
    <property type="match status" value="1"/>
</dbReference>
<organism>
    <name type="scientific">Chromobacterium violaceum (strain ATCC 12472 / DSM 30191 / JCM 1249 / CCUG 213 / NBRC 12614 / NCIMB 9131 / NCTC 9757 / MK)</name>
    <dbReference type="NCBI Taxonomy" id="243365"/>
    <lineage>
        <taxon>Bacteria</taxon>
        <taxon>Pseudomonadati</taxon>
        <taxon>Pseudomonadota</taxon>
        <taxon>Betaproteobacteria</taxon>
        <taxon>Neisseriales</taxon>
        <taxon>Chromobacteriaceae</taxon>
        <taxon>Chromobacterium</taxon>
    </lineage>
</organism>
<reference key="1">
    <citation type="journal article" date="2003" name="Proc. Natl. Acad. Sci. U.S.A.">
        <title>The complete genome sequence of Chromobacterium violaceum reveals remarkable and exploitable bacterial adaptability.</title>
        <authorList>
            <person name="Vasconcelos A.T.R."/>
            <person name="de Almeida D.F."/>
            <person name="Hungria M."/>
            <person name="Guimaraes C.T."/>
            <person name="Antonio R.V."/>
            <person name="Almeida F.C."/>
            <person name="de Almeida L.G.P."/>
            <person name="de Almeida R."/>
            <person name="Alves-Gomes J.A."/>
            <person name="Andrade E.M."/>
            <person name="Araripe J."/>
            <person name="de Araujo M.F.F."/>
            <person name="Astolfi-Filho S."/>
            <person name="Azevedo V."/>
            <person name="Baptista A.J."/>
            <person name="Bataus L.A.M."/>
            <person name="Batista J.S."/>
            <person name="Belo A."/>
            <person name="van den Berg C."/>
            <person name="Bogo M."/>
            <person name="Bonatto S."/>
            <person name="Bordignon J."/>
            <person name="Brigido M.M."/>
            <person name="Brito C.A."/>
            <person name="Brocchi M."/>
            <person name="Burity H.A."/>
            <person name="Camargo A.A."/>
            <person name="Cardoso D.D.P."/>
            <person name="Carneiro N.P."/>
            <person name="Carraro D.M."/>
            <person name="Carvalho C.M.B."/>
            <person name="Cascardo J.C.M."/>
            <person name="Cavada B.S."/>
            <person name="Chueire L.M.O."/>
            <person name="Creczynski-Pasa T.B."/>
            <person name="Cunha-Junior N.C."/>
            <person name="Fagundes N."/>
            <person name="Falcao C.L."/>
            <person name="Fantinatti F."/>
            <person name="Farias I.P."/>
            <person name="Felipe M.S.S."/>
            <person name="Ferrari L.P."/>
            <person name="Ferro J.A."/>
            <person name="Ferro M.I.T."/>
            <person name="Franco G.R."/>
            <person name="Freitas N.S.A."/>
            <person name="Furlan L.R."/>
            <person name="Gazzinelli R.T."/>
            <person name="Gomes E.A."/>
            <person name="Goncalves P.R."/>
            <person name="Grangeiro T.B."/>
            <person name="Grattapaglia D."/>
            <person name="Grisard E.C."/>
            <person name="Hanna E.S."/>
            <person name="Jardim S.N."/>
            <person name="Laurino J."/>
            <person name="Leoi L.C.T."/>
            <person name="Lima L.F.A."/>
            <person name="Loureiro M.F."/>
            <person name="Lyra M.C.C.P."/>
            <person name="Madeira H.M.F."/>
            <person name="Manfio G.P."/>
            <person name="Maranhao A.Q."/>
            <person name="Martins W.S."/>
            <person name="di Mauro S.M.Z."/>
            <person name="de Medeiros S.R.B."/>
            <person name="Meissner R.V."/>
            <person name="Moreira M.A.M."/>
            <person name="Nascimento F.F."/>
            <person name="Nicolas M.F."/>
            <person name="Oliveira J.G."/>
            <person name="Oliveira S.C."/>
            <person name="Paixao R.F.C."/>
            <person name="Parente J.A."/>
            <person name="Pedrosa F.O."/>
            <person name="Pena S.D.J."/>
            <person name="Pereira J.O."/>
            <person name="Pereira M."/>
            <person name="Pinto L.S.R.C."/>
            <person name="Pinto L.S."/>
            <person name="Porto J.I.R."/>
            <person name="Potrich D.P."/>
            <person name="Ramalho-Neto C.E."/>
            <person name="Reis A.M.M."/>
            <person name="Rigo L.U."/>
            <person name="Rondinelli E."/>
            <person name="Santos E.B.P."/>
            <person name="Santos F.R."/>
            <person name="Schneider M.P.C."/>
            <person name="Seuanez H.N."/>
            <person name="Silva A.M.R."/>
            <person name="da Silva A.L.C."/>
            <person name="Silva D.W."/>
            <person name="Silva R."/>
            <person name="Simoes I.C."/>
            <person name="Simon D."/>
            <person name="Soares C.M.A."/>
            <person name="Soares R.B.A."/>
            <person name="Souza E.M."/>
            <person name="Souza K.R.L."/>
            <person name="Souza R.C."/>
            <person name="Steffens M.B.R."/>
            <person name="Steindel M."/>
            <person name="Teixeira S.R."/>
            <person name="Urmenyi T."/>
            <person name="Vettore A."/>
            <person name="Wassem R."/>
            <person name="Zaha A."/>
            <person name="Simpson A.J.G."/>
        </authorList>
    </citation>
    <scope>NUCLEOTIDE SEQUENCE [LARGE SCALE GENOMIC DNA]</scope>
    <source>
        <strain>ATCC 12472 / DSM 30191 / JCM 1249 / CCUG 213 / NBRC 12614 / NCIMB 9131 / NCTC 9757 / MK</strain>
    </source>
</reference>
<proteinExistence type="inferred from homology"/>
<sequence>MSAVGLPLWRQHAHALWQLSKPRVVALIVFCAVIGMFLASPGVPDAAVVVPATLGIALVAGAAAMVNCLVERGVDVRMRRTAWRATATGEVGARETLLVALAVGGMGLALLLACCNALTAWLTLGTFVGYAIVYTLLLKPNTPQNIVIGGASGAMPPVLGWTAVNGQIDAFALALFLIIYTWTPPHFWALALYRRDDYARAGLPMLPVTHGQRYTTLSIVLYGFLLTAVTLLPVALGEAGAIYLGAVLLLDGRLLFLAVRLHRQYADALARRLFAWSIWYLTWLFAALLLDHYYLIPLN</sequence>
<keyword id="KW-0997">Cell inner membrane</keyword>
<keyword id="KW-1003">Cell membrane</keyword>
<keyword id="KW-0350">Heme biosynthesis</keyword>
<keyword id="KW-0472">Membrane</keyword>
<keyword id="KW-1185">Reference proteome</keyword>
<keyword id="KW-0808">Transferase</keyword>
<keyword id="KW-0812">Transmembrane</keyword>
<keyword id="KW-1133">Transmembrane helix</keyword>
<gene>
    <name evidence="1" type="primary">ctaB1</name>
    <name type="ordered locus">CV_0607</name>
</gene>
<feature type="chain" id="PRO_0000327037" description="Protoheme IX farnesyltransferase 1">
    <location>
        <begin position="1"/>
        <end position="299"/>
    </location>
</feature>
<feature type="transmembrane region" description="Helical" evidence="1">
    <location>
        <begin position="24"/>
        <end position="44"/>
    </location>
</feature>
<feature type="transmembrane region" description="Helical" evidence="1">
    <location>
        <begin position="46"/>
        <end position="66"/>
    </location>
</feature>
<feature type="transmembrane region" description="Helical" evidence="1">
    <location>
        <begin position="97"/>
        <end position="117"/>
    </location>
</feature>
<feature type="transmembrane region" description="Helical" evidence="1">
    <location>
        <begin position="118"/>
        <end position="138"/>
    </location>
</feature>
<feature type="transmembrane region" description="Helical" evidence="1">
    <location>
        <begin position="146"/>
        <end position="166"/>
    </location>
</feature>
<feature type="transmembrane region" description="Helical" evidence="1">
    <location>
        <begin position="170"/>
        <end position="190"/>
    </location>
</feature>
<feature type="transmembrane region" description="Helical" evidence="1">
    <location>
        <begin position="217"/>
        <end position="237"/>
    </location>
</feature>
<feature type="transmembrane region" description="Helical" evidence="1">
    <location>
        <begin position="239"/>
        <end position="259"/>
    </location>
</feature>
<feature type="transmembrane region" description="Helical" evidence="1">
    <location>
        <begin position="278"/>
        <end position="298"/>
    </location>
</feature>
<name>COXX1_CHRVO</name>
<evidence type="ECO:0000255" key="1">
    <source>
        <dbReference type="HAMAP-Rule" id="MF_00154"/>
    </source>
</evidence>
<comment type="function">
    <text evidence="1">Converts heme B (protoheme IX) to heme O by substitution of the vinyl group on carbon 2 of heme B porphyrin ring with a hydroxyethyl farnesyl side group.</text>
</comment>
<comment type="catalytic activity">
    <reaction evidence="1">
        <text>heme b + (2E,6E)-farnesyl diphosphate + H2O = Fe(II)-heme o + diphosphate</text>
        <dbReference type="Rhea" id="RHEA:28070"/>
        <dbReference type="ChEBI" id="CHEBI:15377"/>
        <dbReference type="ChEBI" id="CHEBI:33019"/>
        <dbReference type="ChEBI" id="CHEBI:60344"/>
        <dbReference type="ChEBI" id="CHEBI:60530"/>
        <dbReference type="ChEBI" id="CHEBI:175763"/>
        <dbReference type="EC" id="2.5.1.141"/>
    </reaction>
</comment>
<comment type="pathway">
    <text evidence="1">Porphyrin-containing compound metabolism; heme O biosynthesis; heme O from protoheme: step 1/1.</text>
</comment>
<comment type="subcellular location">
    <subcellularLocation>
        <location evidence="1">Cell inner membrane</location>
        <topology evidence="1">Multi-pass membrane protein</topology>
    </subcellularLocation>
</comment>
<comment type="miscellaneous">
    <text evidence="1">Carbon 2 of the heme B porphyrin ring is defined according to the Fischer nomenclature.</text>
</comment>
<comment type="similarity">
    <text evidence="1">Belongs to the UbiA prenyltransferase family. Protoheme IX farnesyltransferase subfamily.</text>
</comment>
<protein>
    <recommendedName>
        <fullName evidence="1">Protoheme IX farnesyltransferase 1</fullName>
        <ecNumber evidence="1">2.5.1.141</ecNumber>
    </recommendedName>
    <alternativeName>
        <fullName evidence="1">Heme B farnesyltransferase 1</fullName>
    </alternativeName>
    <alternativeName>
        <fullName evidence="1">Heme O synthase 1</fullName>
    </alternativeName>
</protein>